<dbReference type="EC" id="2.7.13.3"/>
<dbReference type="EMBL" id="X56658">
    <property type="protein sequence ID" value="CAA39979.1"/>
    <property type="molecule type" value="Genomic_DNA"/>
</dbReference>
<dbReference type="EMBL" id="AP009384">
    <property type="protein sequence ID" value="BAF90652.1"/>
    <property type="molecule type" value="Genomic_DNA"/>
</dbReference>
<dbReference type="EMBL" id="X59071">
    <property type="protein sequence ID" value="CAA41795.1"/>
    <property type="molecule type" value="Genomic_DNA"/>
</dbReference>
<dbReference type="PIR" id="S15166">
    <property type="entry name" value="S15166"/>
</dbReference>
<dbReference type="RefSeq" id="WP_012173173.1">
    <property type="nucleotide sequence ID" value="NC_009937.1"/>
</dbReference>
<dbReference type="SMR" id="P26489"/>
<dbReference type="STRING" id="438753.AZC_4654"/>
<dbReference type="KEGG" id="azc:AZC_4654"/>
<dbReference type="eggNOG" id="COG4191">
    <property type="taxonomic scope" value="Bacteria"/>
</dbReference>
<dbReference type="HOGENOM" id="CLU_000445_114_39_5"/>
<dbReference type="BRENDA" id="2.7.13.3">
    <property type="organism ID" value="609"/>
</dbReference>
<dbReference type="Proteomes" id="UP000000270">
    <property type="component" value="Chromosome"/>
</dbReference>
<dbReference type="GO" id="GO:0005886">
    <property type="term" value="C:plasma membrane"/>
    <property type="evidence" value="ECO:0007669"/>
    <property type="project" value="UniProtKB-SubCell"/>
</dbReference>
<dbReference type="GO" id="GO:0005524">
    <property type="term" value="F:ATP binding"/>
    <property type="evidence" value="ECO:0007669"/>
    <property type="project" value="UniProtKB-KW"/>
</dbReference>
<dbReference type="GO" id="GO:0046872">
    <property type="term" value="F:metal ion binding"/>
    <property type="evidence" value="ECO:0007669"/>
    <property type="project" value="UniProtKB-KW"/>
</dbReference>
<dbReference type="GO" id="GO:0000155">
    <property type="term" value="F:phosphorelay sensor kinase activity"/>
    <property type="evidence" value="ECO:0007669"/>
    <property type="project" value="InterPro"/>
</dbReference>
<dbReference type="GO" id="GO:0009399">
    <property type="term" value="P:nitrogen fixation"/>
    <property type="evidence" value="ECO:0007669"/>
    <property type="project" value="UniProtKB-KW"/>
</dbReference>
<dbReference type="GO" id="GO:0006355">
    <property type="term" value="P:regulation of DNA-templated transcription"/>
    <property type="evidence" value="ECO:0007669"/>
    <property type="project" value="InterPro"/>
</dbReference>
<dbReference type="CDD" id="cd16920">
    <property type="entry name" value="HATPase_TmoS-FixL-DctS-like"/>
    <property type="match status" value="1"/>
</dbReference>
<dbReference type="CDD" id="cd00082">
    <property type="entry name" value="HisKA"/>
    <property type="match status" value="1"/>
</dbReference>
<dbReference type="CDD" id="cd00130">
    <property type="entry name" value="PAS"/>
    <property type="match status" value="1"/>
</dbReference>
<dbReference type="FunFam" id="3.30.450.20:FF:000060">
    <property type="entry name" value="Sensor protein FixL"/>
    <property type="match status" value="1"/>
</dbReference>
<dbReference type="FunFam" id="1.10.287.130:FF:000055">
    <property type="entry name" value="Two-component sensor histidine kinase"/>
    <property type="match status" value="1"/>
</dbReference>
<dbReference type="FunFam" id="3.30.565.10:FF:000042">
    <property type="entry name" value="Two-component sensor histidine kinase KdpD"/>
    <property type="match status" value="1"/>
</dbReference>
<dbReference type="Gene3D" id="1.10.287.130">
    <property type="match status" value="1"/>
</dbReference>
<dbReference type="Gene3D" id="6.10.250.2580">
    <property type="match status" value="1"/>
</dbReference>
<dbReference type="Gene3D" id="3.30.565.10">
    <property type="entry name" value="Histidine kinase-like ATPase, C-terminal domain"/>
    <property type="match status" value="1"/>
</dbReference>
<dbReference type="Gene3D" id="3.30.450.20">
    <property type="entry name" value="PAS domain"/>
    <property type="match status" value="1"/>
</dbReference>
<dbReference type="InterPro" id="IPR036890">
    <property type="entry name" value="HATPase_C_sf"/>
</dbReference>
<dbReference type="InterPro" id="IPR005467">
    <property type="entry name" value="His_kinase_dom"/>
</dbReference>
<dbReference type="InterPro" id="IPR003661">
    <property type="entry name" value="HisK_dim/P_dom"/>
</dbReference>
<dbReference type="InterPro" id="IPR036097">
    <property type="entry name" value="HisK_dim/P_sf"/>
</dbReference>
<dbReference type="InterPro" id="IPR000014">
    <property type="entry name" value="PAS"/>
</dbReference>
<dbReference type="InterPro" id="IPR000700">
    <property type="entry name" value="PAS-assoc_C"/>
</dbReference>
<dbReference type="InterPro" id="IPR035965">
    <property type="entry name" value="PAS-like_dom_sf"/>
</dbReference>
<dbReference type="InterPro" id="IPR013767">
    <property type="entry name" value="PAS_fold"/>
</dbReference>
<dbReference type="InterPro" id="IPR004358">
    <property type="entry name" value="Sig_transdc_His_kin-like_C"/>
</dbReference>
<dbReference type="NCBIfam" id="TIGR00229">
    <property type="entry name" value="sensory_box"/>
    <property type="match status" value="1"/>
</dbReference>
<dbReference type="PANTHER" id="PTHR43065:SF10">
    <property type="entry name" value="PEROXIDE STRESS-ACTIVATED HISTIDINE KINASE MAK3"/>
    <property type="match status" value="1"/>
</dbReference>
<dbReference type="PANTHER" id="PTHR43065">
    <property type="entry name" value="SENSOR HISTIDINE KINASE"/>
    <property type="match status" value="1"/>
</dbReference>
<dbReference type="Pfam" id="PF02518">
    <property type="entry name" value="HATPase_c"/>
    <property type="match status" value="1"/>
</dbReference>
<dbReference type="Pfam" id="PF00512">
    <property type="entry name" value="HisKA"/>
    <property type="match status" value="1"/>
</dbReference>
<dbReference type="Pfam" id="PF00989">
    <property type="entry name" value="PAS"/>
    <property type="match status" value="1"/>
</dbReference>
<dbReference type="PRINTS" id="PR00344">
    <property type="entry name" value="BCTRLSENSOR"/>
</dbReference>
<dbReference type="SMART" id="SM00387">
    <property type="entry name" value="HATPase_c"/>
    <property type="match status" value="1"/>
</dbReference>
<dbReference type="SMART" id="SM00388">
    <property type="entry name" value="HisKA"/>
    <property type="match status" value="1"/>
</dbReference>
<dbReference type="SMART" id="SM00091">
    <property type="entry name" value="PAS"/>
    <property type="match status" value="1"/>
</dbReference>
<dbReference type="SUPFAM" id="SSF55874">
    <property type="entry name" value="ATPase domain of HSP90 chaperone/DNA topoisomerase II/histidine kinase"/>
    <property type="match status" value="1"/>
</dbReference>
<dbReference type="SUPFAM" id="SSF47384">
    <property type="entry name" value="Homodimeric domain of signal transducing histidine kinase"/>
    <property type="match status" value="1"/>
</dbReference>
<dbReference type="SUPFAM" id="SSF55785">
    <property type="entry name" value="PYP-like sensor domain (PAS domain)"/>
    <property type="match status" value="1"/>
</dbReference>
<dbReference type="PROSITE" id="PS50109">
    <property type="entry name" value="HIS_KIN"/>
    <property type="match status" value="1"/>
</dbReference>
<dbReference type="PROSITE" id="PS50113">
    <property type="entry name" value="PAC"/>
    <property type="match status" value="1"/>
</dbReference>
<dbReference type="PROSITE" id="PS50112">
    <property type="entry name" value="PAS"/>
    <property type="match status" value="1"/>
</dbReference>
<comment type="function">
    <text>Putative oxygen sensor; modulates the activity of FixJ, a transcriptional activator of nitrogen fixation fixK gene. FixL probably acts as a kinase that phosphorylates FixJ.</text>
</comment>
<comment type="catalytic activity">
    <reaction>
        <text>ATP + protein L-histidine = ADP + protein N-phospho-L-histidine.</text>
        <dbReference type="EC" id="2.7.13.3"/>
    </reaction>
</comment>
<comment type="cofactor">
    <cofactor evidence="1">
        <name>heme</name>
        <dbReference type="ChEBI" id="CHEBI:30413"/>
    </cofactor>
    <text evidence="1">Binds 1 heme group per subunit.</text>
</comment>
<comment type="activity regulation">
    <text>The heme moiety regulates the kinase activity.</text>
</comment>
<comment type="subcellular location">
    <subcellularLocation>
        <location>Cell inner membrane</location>
        <topology>Multi-pass membrane protein</topology>
    </subcellularLocation>
</comment>
<reference key="1">
    <citation type="journal article" date="1991" name="Mol. Microbiol.">
        <title>Involvement of fixLJ in the regulation of nitrogen fixation in Azorhizobium caulinodans.</title>
        <authorList>
            <person name="Kaminski P.A."/>
            <person name="Elmerich C."/>
        </authorList>
    </citation>
    <scope>NUCLEOTIDE SEQUENCE [GENOMIC DNA]</scope>
</reference>
<reference key="2">
    <citation type="submission" date="2007-04" db="EMBL/GenBank/DDBJ databases">
        <title>Complete genome sequence of the nitrogen-fixing bacterium Azorhizobium caulinodans ORS571.</title>
        <authorList>
            <person name="Lee K.B."/>
            <person name="Backer P.D."/>
            <person name="Aono T."/>
            <person name="Liu C.T."/>
            <person name="Suzuki S."/>
            <person name="Suzuki T."/>
            <person name="Kaneko T."/>
            <person name="Yamada M."/>
            <person name="Tabata S."/>
            <person name="Kupfer D.M."/>
            <person name="Najar F.Z."/>
            <person name="Wiley G.B."/>
            <person name="Roe B."/>
            <person name="Binnewies T."/>
            <person name="Ussery D."/>
            <person name="Vereecke D."/>
            <person name="Gevers D."/>
            <person name="Holsters M."/>
            <person name="Oyaizu H."/>
        </authorList>
    </citation>
    <scope>NUCLEOTIDE SEQUENCE [LARGE SCALE GENOMIC DNA]</scope>
    <source>
        <strain>ATCC 43989 / DSM 5975 / JCM 20966 / LMG 6465 / NBRC 14845 / NCIMB 13405 / ORS 571</strain>
    </source>
</reference>
<reference key="3">
    <citation type="journal article" date="1991" name="Mol. Microbiol.">
        <title>Regulation of nitrogen fixation in Azorhizobium caulinodans: identification of a fixK-like gene, a positive regulator of nifA.</title>
        <authorList>
            <person name="Kaminski P.A."/>
            <person name="Mandon K."/>
            <person name="Arigoni F."/>
            <person name="Desnoues N."/>
            <person name="Elmerich C."/>
        </authorList>
    </citation>
    <scope>NUCLEOTIDE SEQUENCE [GENOMIC DNA] OF 1-50</scope>
</reference>
<name>FIXL_AZOC5</name>
<sequence>MTDTPTQALPPKAPQAGPTVPGTVRRAVPGSAAAALVIAASHFAALSAFDPRILLVLLVIVVLASSGGLFAGLAATAVSALGLALRGLLSGDTVVADWQSLGLLTIAGAGIAVLGERLRRTRLDAVARDRALLAREAHLSSILDTVPDAMIVIDERGIMQSFSITAERLFGYSPSEVIGRNVSMLMPNPHRDQHDLYLSRYLTTGERRIIGIGRVVTGERKDGATFPMELAVGEMHSVSGRFFTGFIRDLTERQNTEARLQELQAELVHISRLTALGEMASTLAHELNQPLSAIANYIKGSRRLLDDGDPKRIPMLQGALDKAAEQALRAGQIIRRLRDFVSRGETERRVESLSKLIEEASALALVGAKEHGIQVRYQIDTSCDLVLADKVQVQQVLLNLMRNALEAMMDASRRQLLVQTTPAEDDMVTVSVCDTGHGISDEMRAQLFTPFVTTKAQGMGVGLSISRTIIEAHGGRIWAEPNAGGGTIFRFTLRTVDEEAMNDA</sequence>
<keyword id="KW-0067">ATP-binding</keyword>
<keyword id="KW-0997">Cell inner membrane</keyword>
<keyword id="KW-1003">Cell membrane</keyword>
<keyword id="KW-0349">Heme</keyword>
<keyword id="KW-0408">Iron</keyword>
<keyword id="KW-0418">Kinase</keyword>
<keyword id="KW-0472">Membrane</keyword>
<keyword id="KW-0479">Metal-binding</keyword>
<keyword id="KW-0535">Nitrogen fixation</keyword>
<keyword id="KW-0547">Nucleotide-binding</keyword>
<keyword id="KW-0597">Phosphoprotein</keyword>
<keyword id="KW-1185">Reference proteome</keyword>
<keyword id="KW-0808">Transferase</keyword>
<keyword id="KW-0812">Transmembrane</keyword>
<keyword id="KW-1133">Transmembrane helix</keyword>
<keyword id="KW-0902">Two-component regulatory system</keyword>
<gene>
    <name type="primary">fixL</name>
    <name type="ordered locus">AZC_4654</name>
</gene>
<evidence type="ECO:0000250" key="1"/>
<evidence type="ECO:0000255" key="2"/>
<evidence type="ECO:0000255" key="3">
    <source>
        <dbReference type="PROSITE-ProRule" id="PRU00107"/>
    </source>
</evidence>
<evidence type="ECO:0000255" key="4">
    <source>
        <dbReference type="PROSITE-ProRule" id="PRU00140"/>
    </source>
</evidence>
<evidence type="ECO:0000255" key="5">
    <source>
        <dbReference type="PROSITE-ProRule" id="PRU00141"/>
    </source>
</evidence>
<evidence type="ECO:0000256" key="6">
    <source>
        <dbReference type="SAM" id="MobiDB-lite"/>
    </source>
</evidence>
<organism>
    <name type="scientific">Azorhizobium caulinodans (strain ATCC 43989 / DSM 5975 / JCM 20966 / LMG 6465 / NBRC 14845 / NCIMB 13405 / ORS 571)</name>
    <dbReference type="NCBI Taxonomy" id="438753"/>
    <lineage>
        <taxon>Bacteria</taxon>
        <taxon>Pseudomonadati</taxon>
        <taxon>Pseudomonadota</taxon>
        <taxon>Alphaproteobacteria</taxon>
        <taxon>Hyphomicrobiales</taxon>
        <taxon>Xanthobacteraceae</taxon>
        <taxon>Azorhizobium</taxon>
    </lineage>
</organism>
<protein>
    <recommendedName>
        <fullName>Sensor protein FixL</fullName>
        <ecNumber>2.7.13.3</ecNumber>
    </recommendedName>
</protein>
<feature type="chain" id="PRO_0000074763" description="Sensor protein FixL">
    <location>
        <begin position="1"/>
        <end position="504"/>
    </location>
</feature>
<feature type="topological domain" description="Cytoplasmic" evidence="2">
    <location>
        <begin position="1"/>
        <end position="50"/>
    </location>
</feature>
<feature type="transmembrane region" description="Helical" evidence="1">
    <location>
        <begin position="51"/>
        <end position="71"/>
    </location>
</feature>
<feature type="topological domain" description="Periplasmic" evidence="2">
    <location>
        <begin position="72"/>
        <end position="99"/>
    </location>
</feature>
<feature type="transmembrane region" description="Helical" evidence="1">
    <location>
        <begin position="100"/>
        <end position="118"/>
    </location>
</feature>
<feature type="topological domain" description="Cytoplasmic" evidence="2">
    <location>
        <begin position="119"/>
        <end position="504"/>
    </location>
</feature>
<feature type="domain" description="PAS" evidence="4">
    <location>
        <begin position="135"/>
        <end position="202"/>
    </location>
</feature>
<feature type="domain" description="PAC" evidence="5">
    <location>
        <begin position="203"/>
        <end position="262"/>
    </location>
</feature>
<feature type="domain" description="Histidine kinase" evidence="3">
    <location>
        <begin position="282"/>
        <end position="497"/>
    </location>
</feature>
<feature type="region of interest" description="Disordered" evidence="6">
    <location>
        <begin position="1"/>
        <end position="21"/>
    </location>
</feature>
<feature type="modified residue" description="Phosphohistidine; by autocatalysis" evidence="3">
    <location>
        <position position="285"/>
    </location>
</feature>
<accession>P26489</accession>
<accession>A8I016</accession>
<proteinExistence type="inferred from homology"/>